<sequence>MESTEKLTDTNAILAYLYETFPLCFIAEGETKPLKIGLFQDLAERLADDSKVSKTQLRVALRRYTSSWRYLKCVKAGAQRVNLDGEPCGELEQEHIDHAQAMLKESQDKAKAKRAALAPKPAAKKAPKKVAVPQRAKTERPAKPAPKAAAPVVNYVQAQLTDLTKKQRVNVKLGMTPVAGVITDINKEDIHVQLDSGLTIKVRAEHILL</sequence>
<dbReference type="EMBL" id="CP001252">
    <property type="protein sequence ID" value="ACK46408.1"/>
    <property type="molecule type" value="Genomic_DNA"/>
</dbReference>
<dbReference type="SMR" id="B8E975"/>
<dbReference type="KEGG" id="sbp:Sbal223_1903"/>
<dbReference type="HOGENOM" id="CLU_113254_0_0_6"/>
<dbReference type="Proteomes" id="UP000002507">
    <property type="component" value="Chromosome"/>
</dbReference>
<dbReference type="GO" id="GO:0005829">
    <property type="term" value="C:cytosol"/>
    <property type="evidence" value="ECO:0007669"/>
    <property type="project" value="TreeGrafter"/>
</dbReference>
<dbReference type="GO" id="GO:0033592">
    <property type="term" value="F:RNA strand annealing activity"/>
    <property type="evidence" value="ECO:0007669"/>
    <property type="project" value="UniProtKB-UniRule"/>
</dbReference>
<dbReference type="GO" id="GO:0034057">
    <property type="term" value="F:RNA strand-exchange activity"/>
    <property type="evidence" value="ECO:0007669"/>
    <property type="project" value="UniProtKB-UniRule"/>
</dbReference>
<dbReference type="GO" id="GO:0010608">
    <property type="term" value="P:post-transcriptional regulation of gene expression"/>
    <property type="evidence" value="ECO:0007669"/>
    <property type="project" value="InterPro"/>
</dbReference>
<dbReference type="FunFam" id="1.10.1710.10:FF:000001">
    <property type="entry name" value="RNA chaperone ProQ"/>
    <property type="match status" value="1"/>
</dbReference>
<dbReference type="Gene3D" id="1.10.1710.10">
    <property type="entry name" value="ProQ/FinO domain"/>
    <property type="match status" value="1"/>
</dbReference>
<dbReference type="HAMAP" id="MF_00749">
    <property type="entry name" value="ProQ"/>
    <property type="match status" value="1"/>
</dbReference>
<dbReference type="InterPro" id="IPR023529">
    <property type="entry name" value="ProQ"/>
</dbReference>
<dbReference type="InterPro" id="IPR016103">
    <property type="entry name" value="ProQ/FinO"/>
</dbReference>
<dbReference type="InterPro" id="IPR036442">
    <property type="entry name" value="ProQ/FinO_sf"/>
</dbReference>
<dbReference type="InterPro" id="IPR035236">
    <property type="entry name" value="ProQ_C"/>
</dbReference>
<dbReference type="NCBIfam" id="NF003434">
    <property type="entry name" value="PRK04950.1"/>
    <property type="match status" value="1"/>
</dbReference>
<dbReference type="PANTHER" id="PTHR38106">
    <property type="entry name" value="RNA CHAPERONE PROQ"/>
    <property type="match status" value="1"/>
</dbReference>
<dbReference type="PANTHER" id="PTHR38106:SF1">
    <property type="entry name" value="RNA CHAPERONE PROQ"/>
    <property type="match status" value="1"/>
</dbReference>
<dbReference type="Pfam" id="PF04352">
    <property type="entry name" value="ProQ"/>
    <property type="match status" value="1"/>
</dbReference>
<dbReference type="Pfam" id="PF17516">
    <property type="entry name" value="ProQ_C"/>
    <property type="match status" value="1"/>
</dbReference>
<dbReference type="SMART" id="SM00945">
    <property type="entry name" value="ProQ"/>
    <property type="match status" value="1"/>
</dbReference>
<dbReference type="SUPFAM" id="SSF48657">
    <property type="entry name" value="FinO-like"/>
    <property type="match status" value="1"/>
</dbReference>
<proteinExistence type="inferred from homology"/>
<gene>
    <name evidence="1" type="primary">proQ</name>
    <name type="ordered locus">Sbal223_1903</name>
</gene>
<reference key="1">
    <citation type="submission" date="2008-12" db="EMBL/GenBank/DDBJ databases">
        <title>Complete sequence of chromosome of Shewanella baltica OS223.</title>
        <authorList>
            <consortium name="US DOE Joint Genome Institute"/>
            <person name="Lucas S."/>
            <person name="Copeland A."/>
            <person name="Lapidus A."/>
            <person name="Glavina del Rio T."/>
            <person name="Dalin E."/>
            <person name="Tice H."/>
            <person name="Bruce D."/>
            <person name="Goodwin L."/>
            <person name="Pitluck S."/>
            <person name="Chertkov O."/>
            <person name="Meincke L."/>
            <person name="Brettin T."/>
            <person name="Detter J.C."/>
            <person name="Han C."/>
            <person name="Kuske C.R."/>
            <person name="Larimer F."/>
            <person name="Land M."/>
            <person name="Hauser L."/>
            <person name="Kyrpides N."/>
            <person name="Ovchinnikova G."/>
            <person name="Brettar I."/>
            <person name="Rodrigues J."/>
            <person name="Konstantinidis K."/>
            <person name="Tiedje J."/>
        </authorList>
    </citation>
    <scope>NUCLEOTIDE SEQUENCE [LARGE SCALE GENOMIC DNA]</scope>
    <source>
        <strain>OS223</strain>
    </source>
</reference>
<organism>
    <name type="scientific">Shewanella baltica (strain OS223)</name>
    <dbReference type="NCBI Taxonomy" id="407976"/>
    <lineage>
        <taxon>Bacteria</taxon>
        <taxon>Pseudomonadati</taxon>
        <taxon>Pseudomonadota</taxon>
        <taxon>Gammaproteobacteria</taxon>
        <taxon>Alteromonadales</taxon>
        <taxon>Shewanellaceae</taxon>
        <taxon>Shewanella</taxon>
    </lineage>
</organism>
<comment type="function">
    <text evidence="1">RNA chaperone with significant RNA binding, RNA strand exchange and RNA duplexing activities.</text>
</comment>
<comment type="subcellular location">
    <subcellularLocation>
        <location evidence="1">Cytoplasm</location>
    </subcellularLocation>
</comment>
<comment type="similarity">
    <text evidence="1">Belongs to the ProQ family.</text>
</comment>
<protein>
    <recommendedName>
        <fullName evidence="1">RNA chaperone ProQ</fullName>
    </recommendedName>
</protein>
<accession>B8E975</accession>
<evidence type="ECO:0000255" key="1">
    <source>
        <dbReference type="HAMAP-Rule" id="MF_00749"/>
    </source>
</evidence>
<evidence type="ECO:0000256" key="2">
    <source>
        <dbReference type="SAM" id="MobiDB-lite"/>
    </source>
</evidence>
<feature type="chain" id="PRO_1000148346" description="RNA chaperone ProQ">
    <location>
        <begin position="1"/>
        <end position="209"/>
    </location>
</feature>
<feature type="region of interest" description="Disordered" evidence="2">
    <location>
        <begin position="105"/>
        <end position="148"/>
    </location>
</feature>
<keyword id="KW-0143">Chaperone</keyword>
<keyword id="KW-0963">Cytoplasm</keyword>
<keyword id="KW-0694">RNA-binding</keyword>
<name>PROQ_SHEB2</name>